<comment type="function">
    <text evidence="1">F(1)F(0) ATP synthase produces ATP from ADP in the presence of a proton or sodium gradient. F-type ATPases consist of two structural domains, F(1) containing the extramembraneous catalytic core and F(0) containing the membrane proton channel, linked together by a central stalk and a peripheral stalk. During catalysis, ATP synthesis in the catalytic domain of F(1) is coupled via a rotary mechanism of the central stalk subunits to proton translocation.</text>
</comment>
<comment type="function">
    <text evidence="1">Key component of the F(0) channel; it plays a direct role in translocation across the membrane. A homomeric c-ring of between 10-14 subunits forms the central stalk rotor element with the F(1) delta and epsilon subunits.</text>
</comment>
<comment type="subunit">
    <text evidence="1">F-type ATPases have 2 components, F(1) - the catalytic core - and F(0) - the membrane proton channel. F(1) has five subunits: alpha(3), beta(3), gamma(1), delta(1), epsilon(1). F(0) has three main subunits: a(1), b(2) and c(10-14). The alpha and beta chains form an alternating ring which encloses part of the gamma chain. F(1) is attached to F(0) by a central stalk formed by the gamma and epsilon chains, while a peripheral stalk is formed by the delta and b chains.</text>
</comment>
<comment type="subcellular location">
    <subcellularLocation>
        <location evidence="1">Cell membrane</location>
        <topology evidence="1">Multi-pass membrane protein</topology>
    </subcellularLocation>
</comment>
<comment type="similarity">
    <text evidence="1">Belongs to the ATPase C chain family.</text>
</comment>
<dbReference type="EMBL" id="CP000885">
    <property type="protein sequence ID" value="ABX44088.1"/>
    <property type="molecule type" value="Genomic_DNA"/>
</dbReference>
<dbReference type="RefSeq" id="WP_012201736.1">
    <property type="nucleotide sequence ID" value="NC_010001.1"/>
</dbReference>
<dbReference type="SMR" id="A9KK97"/>
<dbReference type="STRING" id="357809.Cphy_3741"/>
<dbReference type="KEGG" id="cpy:Cphy_3741"/>
<dbReference type="eggNOG" id="COG0636">
    <property type="taxonomic scope" value="Bacteria"/>
</dbReference>
<dbReference type="HOGENOM" id="CLU_148047_2_1_9"/>
<dbReference type="OrthoDB" id="9810379at2"/>
<dbReference type="Proteomes" id="UP000000370">
    <property type="component" value="Chromosome"/>
</dbReference>
<dbReference type="GO" id="GO:0005886">
    <property type="term" value="C:plasma membrane"/>
    <property type="evidence" value="ECO:0007669"/>
    <property type="project" value="UniProtKB-SubCell"/>
</dbReference>
<dbReference type="GO" id="GO:0045259">
    <property type="term" value="C:proton-transporting ATP synthase complex"/>
    <property type="evidence" value="ECO:0007669"/>
    <property type="project" value="UniProtKB-KW"/>
</dbReference>
<dbReference type="GO" id="GO:0033177">
    <property type="term" value="C:proton-transporting two-sector ATPase complex, proton-transporting domain"/>
    <property type="evidence" value="ECO:0007669"/>
    <property type="project" value="InterPro"/>
</dbReference>
<dbReference type="GO" id="GO:0008289">
    <property type="term" value="F:lipid binding"/>
    <property type="evidence" value="ECO:0007669"/>
    <property type="project" value="UniProtKB-KW"/>
</dbReference>
<dbReference type="GO" id="GO:0046933">
    <property type="term" value="F:proton-transporting ATP synthase activity, rotational mechanism"/>
    <property type="evidence" value="ECO:0007669"/>
    <property type="project" value="UniProtKB-UniRule"/>
</dbReference>
<dbReference type="Gene3D" id="1.20.120.610">
    <property type="entry name" value="lithium bound rotor ring of v- atpase"/>
    <property type="match status" value="1"/>
</dbReference>
<dbReference type="HAMAP" id="MF_01396">
    <property type="entry name" value="ATP_synth_c_bact"/>
    <property type="match status" value="1"/>
</dbReference>
<dbReference type="InterPro" id="IPR005953">
    <property type="entry name" value="ATP_synth_csu_bac/chlpt"/>
</dbReference>
<dbReference type="InterPro" id="IPR000454">
    <property type="entry name" value="ATP_synth_F0_csu"/>
</dbReference>
<dbReference type="InterPro" id="IPR020537">
    <property type="entry name" value="ATP_synth_F0_csu_DDCD_BS"/>
</dbReference>
<dbReference type="InterPro" id="IPR002379">
    <property type="entry name" value="ATPase_proteolipid_c-like_dom"/>
</dbReference>
<dbReference type="InterPro" id="IPR035921">
    <property type="entry name" value="F/V-ATP_Csub_sf"/>
</dbReference>
<dbReference type="NCBIfam" id="TIGR01260">
    <property type="entry name" value="ATP_synt_c"/>
    <property type="match status" value="1"/>
</dbReference>
<dbReference type="Pfam" id="PF00137">
    <property type="entry name" value="ATP-synt_C"/>
    <property type="match status" value="1"/>
</dbReference>
<dbReference type="PRINTS" id="PR00124">
    <property type="entry name" value="ATPASEC"/>
</dbReference>
<dbReference type="SUPFAM" id="SSF81333">
    <property type="entry name" value="F1F0 ATP synthase subunit C"/>
    <property type="match status" value="1"/>
</dbReference>
<dbReference type="PROSITE" id="PS00605">
    <property type="entry name" value="ATPASE_C"/>
    <property type="match status" value="1"/>
</dbReference>
<gene>
    <name evidence="1" type="primary">atpE</name>
    <name type="ordered locus">Cphy_3741</name>
</gene>
<protein>
    <recommendedName>
        <fullName evidence="1">ATP synthase subunit c</fullName>
    </recommendedName>
    <alternativeName>
        <fullName evidence="1">ATP synthase F(0) sector subunit c</fullName>
    </alternativeName>
    <alternativeName>
        <fullName evidence="1">F-type ATPase subunit c</fullName>
        <shortName evidence="1">F-ATPase subunit c</shortName>
    </alternativeName>
    <alternativeName>
        <fullName evidence="1">Lipid-binding protein</fullName>
    </alternativeName>
</protein>
<keyword id="KW-0066">ATP synthesis</keyword>
<keyword id="KW-1003">Cell membrane</keyword>
<keyword id="KW-0138">CF(0)</keyword>
<keyword id="KW-0375">Hydrogen ion transport</keyword>
<keyword id="KW-0406">Ion transport</keyword>
<keyword id="KW-0446">Lipid-binding</keyword>
<keyword id="KW-0472">Membrane</keyword>
<keyword id="KW-1185">Reference proteome</keyword>
<keyword id="KW-0812">Transmembrane</keyword>
<keyword id="KW-1133">Transmembrane helix</keyword>
<keyword id="KW-0813">Transport</keyword>
<organism>
    <name type="scientific">Lachnoclostridium phytofermentans (strain ATCC 700394 / DSM 18823 / ISDg)</name>
    <name type="common">Clostridium phytofermentans</name>
    <dbReference type="NCBI Taxonomy" id="357809"/>
    <lineage>
        <taxon>Bacteria</taxon>
        <taxon>Bacillati</taxon>
        <taxon>Bacillota</taxon>
        <taxon>Clostridia</taxon>
        <taxon>Lachnospirales</taxon>
        <taxon>Lachnospiraceae</taxon>
    </lineage>
</organism>
<proteinExistence type="inferred from homology"/>
<accession>A9KK97</accession>
<name>ATPL_LACP7</name>
<sequence>MISNEAFVLGCSAIGAGLAMIAGIGPGIGQGIAAGHGAAAVGRNPGARGNIMSTMLLGQAVAETTGLYGFAVAIILLFANPLLGKL</sequence>
<reference key="1">
    <citation type="submission" date="2007-11" db="EMBL/GenBank/DDBJ databases">
        <title>Complete genome sequence of Clostridium phytofermentans ISDg.</title>
        <authorList>
            <person name="Leschine S.B."/>
            <person name="Warnick T.A."/>
            <person name="Blanchard J.L."/>
            <person name="Schnell D.J."/>
            <person name="Petit E.L."/>
            <person name="LaTouf W.G."/>
            <person name="Copeland A."/>
            <person name="Lucas S."/>
            <person name="Lapidus A."/>
            <person name="Barry K."/>
            <person name="Glavina del Rio T."/>
            <person name="Dalin E."/>
            <person name="Tice H."/>
            <person name="Pitluck S."/>
            <person name="Kiss H."/>
            <person name="Brettin T."/>
            <person name="Bruce D."/>
            <person name="Detter J.C."/>
            <person name="Han C."/>
            <person name="Kuske C."/>
            <person name="Schmutz J."/>
            <person name="Larimer F."/>
            <person name="Land M."/>
            <person name="Hauser L."/>
            <person name="Kyrpides N."/>
            <person name="Kim E.A."/>
            <person name="Richardson P."/>
        </authorList>
    </citation>
    <scope>NUCLEOTIDE SEQUENCE [LARGE SCALE GENOMIC DNA]</scope>
    <source>
        <strain>ATCC 700394 / DSM 18823 / ISDg</strain>
    </source>
</reference>
<evidence type="ECO:0000255" key="1">
    <source>
        <dbReference type="HAMAP-Rule" id="MF_01396"/>
    </source>
</evidence>
<feature type="chain" id="PRO_0000365876" description="ATP synthase subunit c">
    <location>
        <begin position="1"/>
        <end position="86"/>
    </location>
</feature>
<feature type="transmembrane region" description="Helical" evidence="1">
    <location>
        <begin position="8"/>
        <end position="28"/>
    </location>
</feature>
<feature type="transmembrane region" description="Helical" evidence="1">
    <location>
        <begin position="64"/>
        <end position="84"/>
    </location>
</feature>
<feature type="site" description="Reversibly protonated during proton transport" evidence="1">
    <location>
        <position position="63"/>
    </location>
</feature>